<dbReference type="EC" id="2.1.1.163" evidence="1"/>
<dbReference type="EC" id="2.1.1.201" evidence="1"/>
<dbReference type="EMBL" id="CP000038">
    <property type="protein sequence ID" value="AAZ90530.1"/>
    <property type="molecule type" value="Genomic_DNA"/>
</dbReference>
<dbReference type="RefSeq" id="WP_000227958.1">
    <property type="nucleotide sequence ID" value="NC_007384.1"/>
</dbReference>
<dbReference type="SMR" id="Q3YVD2"/>
<dbReference type="GeneID" id="93778102"/>
<dbReference type="KEGG" id="ssn:SSON_4008"/>
<dbReference type="HOGENOM" id="CLU_037990_0_0_6"/>
<dbReference type="UniPathway" id="UPA00079">
    <property type="reaction ID" value="UER00169"/>
</dbReference>
<dbReference type="UniPathway" id="UPA00232"/>
<dbReference type="Proteomes" id="UP000002529">
    <property type="component" value="Chromosome"/>
</dbReference>
<dbReference type="GO" id="GO:0008425">
    <property type="term" value="F:2-methoxy-6-polyprenyl-1,4-benzoquinol methyltransferase activity"/>
    <property type="evidence" value="ECO:0007669"/>
    <property type="project" value="UniProtKB-UniRule"/>
</dbReference>
<dbReference type="GO" id="GO:0043770">
    <property type="term" value="F:demethylmenaquinone methyltransferase activity"/>
    <property type="evidence" value="ECO:0007669"/>
    <property type="project" value="UniProtKB-UniRule"/>
</dbReference>
<dbReference type="GO" id="GO:0009060">
    <property type="term" value="P:aerobic respiration"/>
    <property type="evidence" value="ECO:0007669"/>
    <property type="project" value="UniProtKB-UniRule"/>
</dbReference>
<dbReference type="GO" id="GO:0009234">
    <property type="term" value="P:menaquinone biosynthetic process"/>
    <property type="evidence" value="ECO:0007669"/>
    <property type="project" value="UniProtKB-UniRule"/>
</dbReference>
<dbReference type="GO" id="GO:0032259">
    <property type="term" value="P:methylation"/>
    <property type="evidence" value="ECO:0007669"/>
    <property type="project" value="UniProtKB-KW"/>
</dbReference>
<dbReference type="CDD" id="cd02440">
    <property type="entry name" value="AdoMet_MTases"/>
    <property type="match status" value="1"/>
</dbReference>
<dbReference type="FunFam" id="3.40.50.150:FF:000014">
    <property type="entry name" value="Ubiquinone/menaquinone biosynthesis C-methyltransferase UbiE"/>
    <property type="match status" value="1"/>
</dbReference>
<dbReference type="Gene3D" id="3.40.50.150">
    <property type="entry name" value="Vaccinia Virus protein VP39"/>
    <property type="match status" value="1"/>
</dbReference>
<dbReference type="HAMAP" id="MF_01813">
    <property type="entry name" value="MenG_UbiE_methyltr"/>
    <property type="match status" value="1"/>
</dbReference>
<dbReference type="InterPro" id="IPR029063">
    <property type="entry name" value="SAM-dependent_MTases_sf"/>
</dbReference>
<dbReference type="InterPro" id="IPR004033">
    <property type="entry name" value="UbiE/COQ5_MeTrFase"/>
</dbReference>
<dbReference type="InterPro" id="IPR023576">
    <property type="entry name" value="UbiE/COQ5_MeTrFase_CS"/>
</dbReference>
<dbReference type="NCBIfam" id="TIGR01934">
    <property type="entry name" value="MenG_MenH_UbiE"/>
    <property type="match status" value="1"/>
</dbReference>
<dbReference type="NCBIfam" id="NF001240">
    <property type="entry name" value="PRK00216.1-1"/>
    <property type="match status" value="1"/>
</dbReference>
<dbReference type="NCBIfam" id="NF001242">
    <property type="entry name" value="PRK00216.1-3"/>
    <property type="match status" value="1"/>
</dbReference>
<dbReference type="NCBIfam" id="NF001244">
    <property type="entry name" value="PRK00216.1-5"/>
    <property type="match status" value="1"/>
</dbReference>
<dbReference type="PANTHER" id="PTHR43591:SF24">
    <property type="entry name" value="2-METHOXY-6-POLYPRENYL-1,4-BENZOQUINOL METHYLASE, MITOCHONDRIAL"/>
    <property type="match status" value="1"/>
</dbReference>
<dbReference type="PANTHER" id="PTHR43591">
    <property type="entry name" value="METHYLTRANSFERASE"/>
    <property type="match status" value="1"/>
</dbReference>
<dbReference type="Pfam" id="PF01209">
    <property type="entry name" value="Ubie_methyltran"/>
    <property type="match status" value="1"/>
</dbReference>
<dbReference type="SUPFAM" id="SSF53335">
    <property type="entry name" value="S-adenosyl-L-methionine-dependent methyltransferases"/>
    <property type="match status" value="1"/>
</dbReference>
<dbReference type="PROSITE" id="PS51608">
    <property type="entry name" value="SAM_MT_UBIE"/>
    <property type="match status" value="1"/>
</dbReference>
<dbReference type="PROSITE" id="PS01183">
    <property type="entry name" value="UBIE_1"/>
    <property type="match status" value="1"/>
</dbReference>
<dbReference type="PROSITE" id="PS01184">
    <property type="entry name" value="UBIE_2"/>
    <property type="match status" value="1"/>
</dbReference>
<sequence>MVDKSQETTHFGFQTVAKEQKADMVAHVFHSVASKYDVMNDLMSFGIHRLWKRFTIDCSGVRRGQTVLDLAGGTGDLTAKFSRLVGETGKVVLADINESMLKMGREKLRNIGVIGNVEYVQANAEALPFPDNTFDCITISFGLRNVTDKDKALRSMYRVLKPGGRLLVLEFSKPIIEPLSKAYDAYSFHVLPRIGSLVANDADSYRYLAESIRMHPDQDTLKAMMQDAGFESVDYYNLTAGVVALHRGYKF</sequence>
<accession>Q3YVD2</accession>
<name>UBIE_SHISS</name>
<keyword id="KW-0474">Menaquinone biosynthesis</keyword>
<keyword id="KW-0489">Methyltransferase</keyword>
<keyword id="KW-1185">Reference proteome</keyword>
<keyword id="KW-0949">S-adenosyl-L-methionine</keyword>
<keyword id="KW-0808">Transferase</keyword>
<keyword id="KW-0831">Ubiquinone biosynthesis</keyword>
<protein>
    <recommendedName>
        <fullName evidence="1">Ubiquinone/menaquinone biosynthesis C-methyltransferase UbiE</fullName>
        <ecNumber evidence="1">2.1.1.163</ecNumber>
        <ecNumber evidence="1">2.1.1.201</ecNumber>
    </recommendedName>
    <alternativeName>
        <fullName evidence="1">2-methoxy-6-polyprenyl-1,4-benzoquinol methylase</fullName>
    </alternativeName>
    <alternativeName>
        <fullName evidence="1">Demethylmenaquinone methyltransferase</fullName>
    </alternativeName>
</protein>
<gene>
    <name evidence="1" type="primary">ubiE</name>
    <name type="ordered locus">SSON_4008</name>
</gene>
<reference key="1">
    <citation type="journal article" date="2005" name="Nucleic Acids Res.">
        <title>Genome dynamics and diversity of Shigella species, the etiologic agents of bacillary dysentery.</title>
        <authorList>
            <person name="Yang F."/>
            <person name="Yang J."/>
            <person name="Zhang X."/>
            <person name="Chen L."/>
            <person name="Jiang Y."/>
            <person name="Yan Y."/>
            <person name="Tang X."/>
            <person name="Wang J."/>
            <person name="Xiong Z."/>
            <person name="Dong J."/>
            <person name="Xue Y."/>
            <person name="Zhu Y."/>
            <person name="Xu X."/>
            <person name="Sun L."/>
            <person name="Chen S."/>
            <person name="Nie H."/>
            <person name="Peng J."/>
            <person name="Xu J."/>
            <person name="Wang Y."/>
            <person name="Yuan Z."/>
            <person name="Wen Y."/>
            <person name="Yao Z."/>
            <person name="Shen Y."/>
            <person name="Qiang B."/>
            <person name="Hou Y."/>
            <person name="Yu J."/>
            <person name="Jin Q."/>
        </authorList>
    </citation>
    <scope>NUCLEOTIDE SEQUENCE [LARGE SCALE GENOMIC DNA]</scope>
    <source>
        <strain>Ss046</strain>
    </source>
</reference>
<proteinExistence type="inferred from homology"/>
<feature type="chain" id="PRO_1000056306" description="Ubiquinone/menaquinone biosynthesis C-methyltransferase UbiE">
    <location>
        <begin position="1"/>
        <end position="251"/>
    </location>
</feature>
<feature type="binding site" evidence="1">
    <location>
        <position position="74"/>
    </location>
    <ligand>
        <name>S-adenosyl-L-methionine</name>
        <dbReference type="ChEBI" id="CHEBI:59789"/>
    </ligand>
</feature>
<feature type="binding site" evidence="1">
    <location>
        <position position="95"/>
    </location>
    <ligand>
        <name>S-adenosyl-L-methionine</name>
        <dbReference type="ChEBI" id="CHEBI:59789"/>
    </ligand>
</feature>
<feature type="binding site" evidence="1">
    <location>
        <begin position="123"/>
        <end position="124"/>
    </location>
    <ligand>
        <name>S-adenosyl-L-methionine</name>
        <dbReference type="ChEBI" id="CHEBI:59789"/>
    </ligand>
</feature>
<feature type="binding site" evidence="1">
    <location>
        <position position="140"/>
    </location>
    <ligand>
        <name>S-adenosyl-L-methionine</name>
        <dbReference type="ChEBI" id="CHEBI:59789"/>
    </ligand>
</feature>
<organism>
    <name type="scientific">Shigella sonnei (strain Ss046)</name>
    <dbReference type="NCBI Taxonomy" id="300269"/>
    <lineage>
        <taxon>Bacteria</taxon>
        <taxon>Pseudomonadati</taxon>
        <taxon>Pseudomonadota</taxon>
        <taxon>Gammaproteobacteria</taxon>
        <taxon>Enterobacterales</taxon>
        <taxon>Enterobacteriaceae</taxon>
        <taxon>Shigella</taxon>
    </lineage>
</organism>
<comment type="function">
    <text evidence="1">Methyltransferase required for the conversion of demethylmenaquinol (DMKH2) to menaquinol (MKH2) and the conversion of 2-polyprenyl-6-methoxy-1,4-benzoquinol (DDMQH2) to 2-polyprenyl-3-methyl-6-methoxy-1,4-benzoquinol (DMQH2).</text>
</comment>
<comment type="catalytic activity">
    <reaction evidence="1">
        <text>a 2-demethylmenaquinol + S-adenosyl-L-methionine = a menaquinol + S-adenosyl-L-homocysteine + H(+)</text>
        <dbReference type="Rhea" id="RHEA:42640"/>
        <dbReference type="Rhea" id="RHEA-COMP:9539"/>
        <dbReference type="Rhea" id="RHEA-COMP:9563"/>
        <dbReference type="ChEBI" id="CHEBI:15378"/>
        <dbReference type="ChEBI" id="CHEBI:18151"/>
        <dbReference type="ChEBI" id="CHEBI:55437"/>
        <dbReference type="ChEBI" id="CHEBI:57856"/>
        <dbReference type="ChEBI" id="CHEBI:59789"/>
        <dbReference type="EC" id="2.1.1.163"/>
    </reaction>
</comment>
<comment type="catalytic activity">
    <reaction evidence="1">
        <text>a 2-methoxy-6-(all-trans-polyprenyl)benzene-1,4-diol + S-adenosyl-L-methionine = a 5-methoxy-2-methyl-3-(all-trans-polyprenyl)benzene-1,4-diol + S-adenosyl-L-homocysteine + H(+)</text>
        <dbReference type="Rhea" id="RHEA:28286"/>
        <dbReference type="Rhea" id="RHEA-COMP:10858"/>
        <dbReference type="Rhea" id="RHEA-COMP:10859"/>
        <dbReference type="ChEBI" id="CHEBI:15378"/>
        <dbReference type="ChEBI" id="CHEBI:57856"/>
        <dbReference type="ChEBI" id="CHEBI:59789"/>
        <dbReference type="ChEBI" id="CHEBI:84166"/>
        <dbReference type="ChEBI" id="CHEBI:84167"/>
        <dbReference type="EC" id="2.1.1.201"/>
    </reaction>
</comment>
<comment type="pathway">
    <text evidence="1">Quinol/quinone metabolism; menaquinone biosynthesis; menaquinol from 1,4-dihydroxy-2-naphthoate: step 2/2.</text>
</comment>
<comment type="pathway">
    <text evidence="1">Cofactor biosynthesis; ubiquinone biosynthesis.</text>
</comment>
<comment type="similarity">
    <text evidence="1">Belongs to the class I-like SAM-binding methyltransferase superfamily. MenG/UbiE family.</text>
</comment>
<evidence type="ECO:0000255" key="1">
    <source>
        <dbReference type="HAMAP-Rule" id="MF_01813"/>
    </source>
</evidence>